<gene>
    <name type="primary">oadA1</name>
    <name type="synonym">oadA</name>
    <name type="ordered locus">STM0055</name>
</gene>
<gene>
    <name type="primary">oadA2</name>
    <name type="ordered locus">STM3352</name>
</gene>
<reference key="1">
    <citation type="journal article" date="1992" name="J. Biol. Chem.">
        <title>Sequence of the sodium ion pump oxaloacetate decarboxylase from Salmonella typhimurium.</title>
        <authorList>
            <person name="Woehlke G."/>
            <person name="Wifling K."/>
            <person name="Dimroth P."/>
        </authorList>
    </citation>
    <scope>NUCLEOTIDE SEQUENCE [GENOMIC DNA]</scope>
    <source>
        <strain>LT2</strain>
    </source>
</reference>
<reference key="2">
    <citation type="journal article" date="2001" name="Nature">
        <title>Complete genome sequence of Salmonella enterica serovar Typhimurium LT2.</title>
        <authorList>
            <person name="McClelland M."/>
            <person name="Sanderson K.E."/>
            <person name="Spieth J."/>
            <person name="Clifton S.W."/>
            <person name="Latreille P."/>
            <person name="Courtney L."/>
            <person name="Porwollik S."/>
            <person name="Ali J."/>
            <person name="Dante M."/>
            <person name="Du F."/>
            <person name="Hou S."/>
            <person name="Layman D."/>
            <person name="Leonard S."/>
            <person name="Nguyen C."/>
            <person name="Scott K."/>
            <person name="Holmes A."/>
            <person name="Grewal N."/>
            <person name="Mulvaney E."/>
            <person name="Ryan E."/>
            <person name="Sun H."/>
            <person name="Florea L."/>
            <person name="Miller W."/>
            <person name="Stoneking T."/>
            <person name="Nhan M."/>
            <person name="Waterston R."/>
            <person name="Wilson R.K."/>
        </authorList>
    </citation>
    <scope>NUCLEOTIDE SEQUENCE [LARGE SCALE GENOMIC DNA]</scope>
    <source>
        <strain>LT2 / SGSC1412 / ATCC 700720</strain>
    </source>
</reference>
<evidence type="ECO:0000250" key="1"/>
<evidence type="ECO:0000255" key="2">
    <source>
        <dbReference type="PROSITE-ProRule" id="PRU01066"/>
    </source>
</evidence>
<evidence type="ECO:0000255" key="3">
    <source>
        <dbReference type="PROSITE-ProRule" id="PRU01151"/>
    </source>
</evidence>
<feature type="initiator methionine" description="Removed" evidence="1">
    <location>
        <position position="1"/>
    </location>
</feature>
<feature type="chain" id="PRO_0000146834" description="Oxaloacetate decarboxylase alpha chain">
    <location>
        <begin position="2"/>
        <end position="591"/>
    </location>
</feature>
<feature type="domain" description="Pyruvate carboxyltransferase" evidence="3">
    <location>
        <begin position="3"/>
        <end position="263"/>
    </location>
</feature>
<feature type="domain" description="Biotinyl-binding" evidence="2">
    <location>
        <begin position="518"/>
        <end position="591"/>
    </location>
</feature>
<feature type="modified residue" description="N6-biotinyllysine" evidence="1 2">
    <location>
        <position position="557"/>
    </location>
</feature>
<comment type="function">
    <text>Catalyzes the decarboxylation of oxaloacetate coupled to Na(+) translocation.</text>
</comment>
<comment type="catalytic activity">
    <reaction>
        <text>oxaloacetate + 2 Na(+)(in) + H(+) = pyruvate + 2 Na(+)(out) + CO2</text>
        <dbReference type="Rhea" id="RHEA:57724"/>
        <dbReference type="ChEBI" id="CHEBI:15361"/>
        <dbReference type="ChEBI" id="CHEBI:15378"/>
        <dbReference type="ChEBI" id="CHEBI:16452"/>
        <dbReference type="ChEBI" id="CHEBI:16526"/>
        <dbReference type="ChEBI" id="CHEBI:29101"/>
        <dbReference type="EC" id="7.2.4.2"/>
    </reaction>
</comment>
<comment type="cofactor">
    <cofactor>
        <name>biotin</name>
        <dbReference type="ChEBI" id="CHEBI:57586"/>
    </cofactor>
</comment>
<comment type="subunit">
    <text>Composed of three chains (alpha, beta, and gamma).</text>
</comment>
<keyword id="KW-0092">Biotin</keyword>
<keyword id="KW-0406">Ion transport</keyword>
<keyword id="KW-1185">Reference proteome</keyword>
<keyword id="KW-0915">Sodium</keyword>
<keyword id="KW-0739">Sodium transport</keyword>
<keyword id="KW-1278">Translocase</keyword>
<keyword id="KW-0813">Transport</keyword>
<name>DCOA_SALTY</name>
<dbReference type="EC" id="7.2.4.2"/>
<dbReference type="EMBL" id="M96434">
    <property type="protein sequence ID" value="AAA02973.1"/>
    <property type="molecule type" value="Unassigned_DNA"/>
</dbReference>
<dbReference type="EMBL" id="AE006468">
    <property type="protein sequence ID" value="AAL19019.1"/>
    <property type="molecule type" value="Genomic_DNA"/>
</dbReference>
<dbReference type="EMBL" id="AE006468">
    <property type="protein sequence ID" value="AAL22221.1"/>
    <property type="molecule type" value="Genomic_DNA"/>
</dbReference>
<dbReference type="PIR" id="B44465">
    <property type="entry name" value="B44465"/>
</dbReference>
<dbReference type="RefSeq" id="NP_459060.1">
    <property type="nucleotide sequence ID" value="NC_003197.2"/>
</dbReference>
<dbReference type="RefSeq" id="NP_462262.1">
    <property type="nucleotide sequence ID" value="NC_003197.2"/>
</dbReference>
<dbReference type="RefSeq" id="WP_000150421.1">
    <property type="nucleotide sequence ID" value="NC_003197.2"/>
</dbReference>
<dbReference type="SMR" id="Q03030"/>
<dbReference type="STRING" id="99287.STM0055"/>
<dbReference type="TCDB" id="3.B.1.1.1">
    <property type="family name" value="the na(+)-transporting carboxylic acid decarboxylase (nat-dc) family"/>
</dbReference>
<dbReference type="PaxDb" id="99287-STM0055"/>
<dbReference type="GeneID" id="1251573"/>
<dbReference type="GeneID" id="1254875"/>
<dbReference type="KEGG" id="stm:STM0055"/>
<dbReference type="KEGG" id="stm:STM3352"/>
<dbReference type="PATRIC" id="fig|99287.12.peg.3553"/>
<dbReference type="HOGENOM" id="CLU_000395_4_3_6"/>
<dbReference type="PhylomeDB" id="Q03030"/>
<dbReference type="BioCyc" id="SENT99287:STM3352-MONOMER"/>
<dbReference type="Proteomes" id="UP000001014">
    <property type="component" value="Chromosome"/>
</dbReference>
<dbReference type="GO" id="GO:0015451">
    <property type="term" value="F:decarboxylation-driven active transmembrane transporter activity"/>
    <property type="evidence" value="ECO:0007669"/>
    <property type="project" value="UniProtKB-EC"/>
</dbReference>
<dbReference type="GO" id="GO:0008948">
    <property type="term" value="F:oxaloacetate decarboxylase activity"/>
    <property type="evidence" value="ECO:0007669"/>
    <property type="project" value="InterPro"/>
</dbReference>
<dbReference type="GO" id="GO:0004736">
    <property type="term" value="F:pyruvate carboxylase activity"/>
    <property type="evidence" value="ECO:0007669"/>
    <property type="project" value="UniProtKB-ARBA"/>
</dbReference>
<dbReference type="GO" id="GO:0006814">
    <property type="term" value="P:sodium ion transport"/>
    <property type="evidence" value="ECO:0007669"/>
    <property type="project" value="UniProtKB-KW"/>
</dbReference>
<dbReference type="CDD" id="cd06850">
    <property type="entry name" value="biotinyl_domain"/>
    <property type="match status" value="1"/>
</dbReference>
<dbReference type="CDD" id="cd07937">
    <property type="entry name" value="DRE_TIM_PC_TC_5S"/>
    <property type="match status" value="1"/>
</dbReference>
<dbReference type="FunFam" id="2.40.50.100:FF:000003">
    <property type="entry name" value="Acetyl-CoA carboxylase biotin carboxyl carrier protein"/>
    <property type="match status" value="1"/>
</dbReference>
<dbReference type="Gene3D" id="2.40.50.100">
    <property type="match status" value="1"/>
</dbReference>
<dbReference type="Gene3D" id="3.20.20.70">
    <property type="entry name" value="Aldolase class I"/>
    <property type="match status" value="1"/>
</dbReference>
<dbReference type="InterPro" id="IPR013785">
    <property type="entry name" value="Aldolase_TIM"/>
</dbReference>
<dbReference type="InterPro" id="IPR001882">
    <property type="entry name" value="Biotin_BS"/>
</dbReference>
<dbReference type="InterPro" id="IPR000089">
    <property type="entry name" value="Biotin_lipoyl"/>
</dbReference>
<dbReference type="InterPro" id="IPR003379">
    <property type="entry name" value="Carboxylase_cons_dom"/>
</dbReference>
<dbReference type="InterPro" id="IPR005776">
    <property type="entry name" value="OadA"/>
</dbReference>
<dbReference type="InterPro" id="IPR055268">
    <property type="entry name" value="PCB-like"/>
</dbReference>
<dbReference type="InterPro" id="IPR000891">
    <property type="entry name" value="PYR_CT"/>
</dbReference>
<dbReference type="InterPro" id="IPR011053">
    <property type="entry name" value="Single_hybrid_motif"/>
</dbReference>
<dbReference type="NCBIfam" id="TIGR01108">
    <property type="entry name" value="oadA"/>
    <property type="match status" value="1"/>
</dbReference>
<dbReference type="NCBIfam" id="NF006761">
    <property type="entry name" value="PRK09282.1"/>
    <property type="match status" value="1"/>
</dbReference>
<dbReference type="NCBIfam" id="NF010643">
    <property type="entry name" value="PRK14040.1"/>
    <property type="match status" value="1"/>
</dbReference>
<dbReference type="PANTHER" id="PTHR43778">
    <property type="entry name" value="PYRUVATE CARBOXYLASE"/>
    <property type="match status" value="1"/>
</dbReference>
<dbReference type="PANTHER" id="PTHR43778:SF2">
    <property type="entry name" value="PYRUVATE CARBOXYLASE, MITOCHONDRIAL"/>
    <property type="match status" value="1"/>
</dbReference>
<dbReference type="Pfam" id="PF00364">
    <property type="entry name" value="Biotin_lipoyl"/>
    <property type="match status" value="1"/>
</dbReference>
<dbReference type="Pfam" id="PF00682">
    <property type="entry name" value="HMGL-like"/>
    <property type="match status" value="1"/>
</dbReference>
<dbReference type="Pfam" id="PF02436">
    <property type="entry name" value="PYC_OADA"/>
    <property type="match status" value="1"/>
</dbReference>
<dbReference type="SUPFAM" id="SSF51569">
    <property type="entry name" value="Aldolase"/>
    <property type="match status" value="1"/>
</dbReference>
<dbReference type="SUPFAM" id="SSF89000">
    <property type="entry name" value="post-HMGL domain-like"/>
    <property type="match status" value="1"/>
</dbReference>
<dbReference type="SUPFAM" id="SSF51230">
    <property type="entry name" value="Single hybrid motif"/>
    <property type="match status" value="1"/>
</dbReference>
<dbReference type="PROSITE" id="PS00188">
    <property type="entry name" value="BIOTIN"/>
    <property type="match status" value="1"/>
</dbReference>
<dbReference type="PROSITE" id="PS50968">
    <property type="entry name" value="BIOTINYL_LIPOYL"/>
    <property type="match status" value="1"/>
</dbReference>
<dbReference type="PROSITE" id="PS50991">
    <property type="entry name" value="PYR_CT"/>
    <property type="match status" value="1"/>
</dbReference>
<sequence length="591" mass="63207">MTIAITDVVLRDAHQSLFATRLRLDDMLPIAAALDDVGYGSLECWGGATFDACIRFLGEDPWLRLRELKKAMPKTPLQMLLRGQNLLGYRHYADDVVERFVERAVKNGMDVFRVFDAMNDPRNMKAALQAVRSHGAHAQGTLSYTTSPAHTLQTWLDLTEQLLETGVDSIAIKDMSGILTPMAAYELVSEIKKRFEVRLHLHCHATTGMAEMALLKAIEAGVDGVDTAISSMSATYGHPATEALVATLAGTEHDTGLDILKLENIAAYFREVRKKYHAFEGQLKGYDSRILVAQVPGGMLTNLESQLKQQNAADKLDQVLAEIPRVREDLGFIPLVTPTSQIVGTQAVLNVLTGERYKTIAKETAGILKGEYGHTPVPVNAALQARVLEGGAPVTCRPADLLKPELAELEADVRRQAQEKGITLAGNAIDDVLTVALFPQIGLKFLENRNNPAAFEPLPQAEAAQPVAKAEKPAASGIYTVEVEGKAFVVKVSDGGDISQLTAAVPAASSAPVQAAAPAGAGTPVTAPLAGNIWKVIATEGQTVAEGDVLLILEAMKMETEIRAAQAGTVRGIAVKSGDAVSVGDTLMTLA</sequence>
<protein>
    <recommendedName>
        <fullName>Oxaloacetate decarboxylase alpha chain</fullName>
        <ecNumber>7.2.4.2</ecNumber>
    </recommendedName>
</protein>
<organism>
    <name type="scientific">Salmonella typhimurium (strain LT2 / SGSC1412 / ATCC 700720)</name>
    <dbReference type="NCBI Taxonomy" id="99287"/>
    <lineage>
        <taxon>Bacteria</taxon>
        <taxon>Pseudomonadati</taxon>
        <taxon>Pseudomonadota</taxon>
        <taxon>Gammaproteobacteria</taxon>
        <taxon>Enterobacterales</taxon>
        <taxon>Enterobacteriaceae</taxon>
        <taxon>Salmonella</taxon>
    </lineage>
</organism>
<accession>Q03030</accession>
<proteinExistence type="inferred from homology"/>